<accession>E9Q309</accession>
<accession>A0A1D5RMJ4</accession>
<accession>D3YTP2</accession>
<accession>Q6A062</accession>
<accession>Q8BXM7</accession>
<comment type="function">
    <text evidence="1">Plays an essential role in centriole growth by stabilizing a procentriolar seed composed of at least, SASS6 and CPAP. Required for anchoring microtubules to the centrosomes and for the integrity of the microtubule network. Recruits PPARA to discrete subcellular compartments and thereby modulates PPARA activity. Required for ciliation.</text>
</comment>
<comment type="subunit">
    <text evidence="1 5">Part of a ternary complex that contains CEP350, CEP43 and MAPRE1 (By similarity). Interacts (via C-terminus) directly with CEP43 (via N-terminus) (By similarity). Interacts with NR1H3, PPARA, PPARD and PPARG (By similarity). Interacts directly with microtubules (By similarity). Interacts with the fusion protein CEP43-FGFR1, and by doing so recruits and activates PI3K and PLC-gamma (By similarity). Interacts with CYLD (By similarity). Interacts with CFAP157 (PubMed:27965440). Interacts with CEP19 (via C-terminus) (By similarity). Interacts with CEP78; promoting CEP78 localization to centrosome and centriole (By similarity).</text>
</comment>
<comment type="subcellular location">
    <subcellularLocation>
        <location evidence="1">Cytoplasm</location>
        <location evidence="1">Cytoskeleton</location>
        <location evidence="1">Microtubule organizing center</location>
        <location evidence="1">Centrosome</location>
    </subcellularLocation>
    <subcellularLocation>
        <location evidence="1">Cytoplasm</location>
        <location evidence="1">Cytoskeleton</location>
        <location evidence="1">Spindle</location>
    </subcellularLocation>
    <subcellularLocation>
        <location evidence="1">Nucleus</location>
    </subcellularLocation>
    <subcellularLocation>
        <location evidence="1">Cytoplasm</location>
        <location evidence="1">Cytoskeleton</location>
        <location evidence="1">Microtubule organizing center</location>
        <location evidence="1">Centrosome</location>
        <location evidence="1">Centriole</location>
    </subcellularLocation>
    <subcellularLocation>
        <location evidence="1">Cytoplasm</location>
        <location evidence="1">Cytoskeleton</location>
        <location evidence="1">Cilium basal body</location>
    </subcellularLocation>
    <text evidence="1">Associated with mitotic spindles. Nuclear, in discrete foci. Associated with intermediate filaments. Also present in the pericentrosomal area. Localizes on both mother and daughter centrioles. Localizes to an axial position on the mother centriole. Localizes to the distal end of the centriole on the subdistal appendage region.</text>
</comment>
<comment type="PTM">
    <text evidence="1">Phosphorylated during mitosis.</text>
</comment>
<name>CE350_MOUSE</name>
<sequence>MRSSKSKEVPLPNPRNSQSKETIQDVTTSWDALSQTKAALRHIENKLEVTPTSTAVIDSVMDTKKSASATRKISRKDGRCLDDSWASAPTSKFSKPRKEKSRSPLRATTLESNVKKNNRVEFREPLVSYRETHGTPFSLSPSHLESKHVYCIHEEKPESGKQMVVSREDRNIQCCDFESAQPSVISDTVVRFLNDGPAIDALHSSECLMKMGVHVRTEDEMPNRTKGSENNSKPSLNNMEHDVDPKVMLLSDSSPSSSACNSQRSDISKRQQHDIKLEKLKERIRKQWEHSEEINGQAQTLGHIDHPVMVVNVDNSVTTKVRKVATAPPAPAYKGFNPSETKIRTPDGKVWQEAEFQSMSRELYRDLALQFTDDTSVKEKPVEKSKEKKVVKPVRKIQKVTQLSNPECKTGSSRLISTSSWRDGQKLVKKILGPAPKMEQKERRPTSNDRSGRERVAKFGGHIGRAESDPKLDVSHKQLPRSSARSRSSRAWSETNIVKSALSLPDNKQEESAALNKDFLPVEIRGILDDLQLDSSAQAVRQEAGEGQNQKSSAPEQVPRSHSPVKRKPDKITANEDPPVISKKRHYDTDEVRQYIVRQQEERRRRQHEEKKAQKEATEQKNKRLQELYRRQREAFSKAKTVPPSDPLVSRRLQETYSKLLLEKTLLEEPARQHVTQDIQARPGYQPSGESDKENKIQERPPSASSSSDLSLSEPPQPLARRDLMEPTWMQPDRLSPRVHSSQAQPLAGTTENLLSHLLHLEHVGILHKDYESVLPAKKSHNTASGPLTFTPQPYLTSQAPHPDALLKPSTSQYKTKLDRIEALKATAASLSSRIESEAKKLAGASINYGSVWNTECDVKLAPQENGPWTKAISPPVKEDIEDAFSARIQKMLGTCVSHAAFDDELPGVGSLSEYKKLPEMIRPQSAISSLRMKSPSPKPGGLLAQLCRRQTDSSSSDIQACSQERAKRSLCSSIDSVSEGPLLSEGSLSEEEERRDARPLLKVAEILKEKEFCAGERNSYEPIKEFQKEAEKFLPLFGHIGGTQSKGPWEELAKGSPHSVINIFTKSYQLYGKGFEDRGTLVSRPLNATATPLSSVSYEDDFVSSPGSGTLTERKSTLESQVDGSSLGVQEEHLSRQFACDLASVDATSQHSSGARSAGSTRSSSASKGKKGKKDKMDWLDSLTGSAQNPLIDEEKVQSDSERGSHPSRKLGTGSKLAVGDSEQTLDAESTLEDLSGHSVSGSSDKGRSQKTPTSPLSPSSQKLLQFDLPGTSLERSKSSVIVPPTTTGFKPTAAFTDVNKTEMASAPGPQRFSPAGLQHRMAAELSYLSALEESVRQLSDVERVRGIALAQQESVSLAQIIKAQQQRHERDLALLKLKAEQEALECQRQLEETRNKTAQVHAESLQQVVKSQREVTEVLQEATCKIAAQQSETARLTTDAARQICEMAELTRTHLADAITTSGVPLATLYDHQRQHFPDFMRKLRTKAETDRISHSASHSQSKEGAVDSKRQKFSPSRDSYSESSRYKSHDYRSSGSSRQDSPSVPPSKENEKPFHGEKMESSVDEQLQTAADDSLRSDSIPSLPDEKDSTSIATEYSLKFDESMTEDEIEEKSFRSLLPSESHRRFNMEKKRGHHDDSDEDASPDKTALSSTKELSMPFSGGQDSFSKFTMEMVRQYMKEEEVRAAHQSSLLRLREKALKEKTKAELAWLEHQKKHLRDKGEDDKMPPLRKKQRGLLLRLQQEKAEIKRLQEANKAARKERQLILKQQEEIERIRQTTIKLQEKLKSAGEKKLGSLADDDEAEDNKAASPGPPGLETRSPSPISISSSETSSIMQKLKSMRSRMDEKFLTKREQKLMQRRQHAEELLEWKRRLDAEEAEIQQMEKQALAAWDKELVKPRTPKKEQESQRTEQKGIASEEGSPMPSYSPRNSESCIPEDLGSPSDLCVPSEARVQAQPGSPEHSTLTEEMVFSQELESTSPSKHSPPKSCLSMSKQESSKASHRTEGHCHLPVKSHQPCYSWSDESLSMTQSETTSDQSDIEGRIRALKDELRKRKSVVEQLKREQRKRQKERLKAQEASLLRQLETYDEFIKKTEGELSQDLDISPTSKFQMKTLSSVSEKPKIKPHPLHRSETAKTWKSVTESERSRGSLASIAEHVDSSLSCSERAISERSLSAYAKRGVELDSRIEHLQASSPDLSSRKAQTESRDSLESAPSLSPVKELNAPDRIYDVSEAKAEDTSQKSEIQEIESMKLESSEVEDACCKQSGGSEVLLKLDLASETLSSKELPSDSANVQQDLDKPATETSHEKEEALKEDQSNHSTDDRSPDIQSAGGIPEQGCRESGDSTCSGQLSVPKESSYSEDFEVSSFRKGISADEISKDDSEGSSPSSLRKDSQSHRDRSQLTRSSRSRATGSGSDEEISECLGEKSLSVHSGVHSERLLELRSPTELMKSKERSDVGHEQGGTEPLPLAATEELLDFHIGDRVLIGSVQPGTLRFKGETDFAKGFWAGVELDKPEGNNNGTYDGIVYFVCKDKHGIFAPPQKISHLLENFDDTDINEDEESYSDEQYQPYNQEQKDIKCLKDRENNIAEYFCEKSLPSMHNTDASVDKDRSLNIETDTSEVLEVHGHQQPSVDPLISYKENKVLVSDATESVPAAAGAATSDNTFSGESKQQQLAEKEENFYSQVLEKPSTPLLDLLTREKNQLEAQLKSSISEEKKSKQQLETVSLLTDSLLQVFVKDTVSQLQQVKKARNEKIQLSNQEFLDQKKVPPQDLPQNTEEQSPSVPSCFLRSELEDEKEEISSPDMCPRPESPVFGASGQEELAKRLAELEISREFLSALDDQDWFDEDFGLSSSHKIQKNKAEETIVPLMAEPKRAPQKPCETLLAVPHTAEEVESLVHNAAEELWKWKELGQDLHGLSLPTTFLGGASKGLDIGSTSRRVYKQAVFDLTKEIFEEIFAEDPNVNQPVWMKPCRINSSYFRRVKNPNNLDEIKHFITTEVLKLLSLKKEPNHKTDWQKMMKFGRKKRDRVDHILVQELHEEEAQWVNYDEDELCVKMQLADGIFETLIKDTIDVLNQISEKQGRMLLV</sequence>
<evidence type="ECO:0000250" key="1">
    <source>
        <dbReference type="UniProtKB" id="Q5VT06"/>
    </source>
</evidence>
<evidence type="ECO:0000255" key="2"/>
<evidence type="ECO:0000255" key="3">
    <source>
        <dbReference type="PROSITE-ProRule" id="PRU00045"/>
    </source>
</evidence>
<evidence type="ECO:0000256" key="4">
    <source>
        <dbReference type="SAM" id="MobiDB-lite"/>
    </source>
</evidence>
<evidence type="ECO:0000269" key="5">
    <source>
    </source>
</evidence>
<evidence type="ECO:0000303" key="6">
    <source>
    </source>
</evidence>
<evidence type="ECO:0000305" key="7"/>
<evidence type="ECO:0000312" key="8">
    <source>
        <dbReference type="MGI" id="MGI:1921331"/>
    </source>
</evidence>
<evidence type="ECO:0007744" key="9">
    <source>
    </source>
</evidence>
<evidence type="ECO:0007744" key="10">
    <source>
    </source>
</evidence>
<keyword id="KW-0966">Cell projection</keyword>
<keyword id="KW-0175">Coiled coil</keyword>
<keyword id="KW-0963">Cytoplasm</keyword>
<keyword id="KW-0206">Cytoskeleton</keyword>
<keyword id="KW-0539">Nucleus</keyword>
<keyword id="KW-0597">Phosphoprotein</keyword>
<keyword id="KW-1185">Reference proteome</keyword>
<reference key="1">
    <citation type="journal article" date="2009" name="PLoS Biol.">
        <title>Lineage-specific biology revealed by a finished genome assembly of the mouse.</title>
        <authorList>
            <person name="Church D.M."/>
            <person name="Goodstadt L."/>
            <person name="Hillier L.W."/>
            <person name="Zody M.C."/>
            <person name="Goldstein S."/>
            <person name="She X."/>
            <person name="Bult C.J."/>
            <person name="Agarwala R."/>
            <person name="Cherry J.L."/>
            <person name="DiCuccio M."/>
            <person name="Hlavina W."/>
            <person name="Kapustin Y."/>
            <person name="Meric P."/>
            <person name="Maglott D."/>
            <person name="Birtle Z."/>
            <person name="Marques A.C."/>
            <person name="Graves T."/>
            <person name="Zhou S."/>
            <person name="Teague B."/>
            <person name="Potamousis K."/>
            <person name="Churas C."/>
            <person name="Place M."/>
            <person name="Herschleb J."/>
            <person name="Runnheim R."/>
            <person name="Forrest D."/>
            <person name="Amos-Landgraf J."/>
            <person name="Schwartz D.C."/>
            <person name="Cheng Z."/>
            <person name="Lindblad-Toh K."/>
            <person name="Eichler E.E."/>
            <person name="Ponting C.P."/>
        </authorList>
    </citation>
    <scope>NUCLEOTIDE SEQUENCE [LARGE SCALE GENOMIC DNA]</scope>
    <source>
        <strain>C57BL/6J</strain>
    </source>
</reference>
<reference key="2">
    <citation type="journal article" date="2005" name="Science">
        <title>The transcriptional landscape of the mammalian genome.</title>
        <authorList>
            <person name="Carninci P."/>
            <person name="Kasukawa T."/>
            <person name="Katayama S."/>
            <person name="Gough J."/>
            <person name="Frith M.C."/>
            <person name="Maeda N."/>
            <person name="Oyama R."/>
            <person name="Ravasi T."/>
            <person name="Lenhard B."/>
            <person name="Wells C."/>
            <person name="Kodzius R."/>
            <person name="Shimokawa K."/>
            <person name="Bajic V.B."/>
            <person name="Brenner S.E."/>
            <person name="Batalov S."/>
            <person name="Forrest A.R."/>
            <person name="Zavolan M."/>
            <person name="Davis M.J."/>
            <person name="Wilming L.G."/>
            <person name="Aidinis V."/>
            <person name="Allen J.E."/>
            <person name="Ambesi-Impiombato A."/>
            <person name="Apweiler R."/>
            <person name="Aturaliya R.N."/>
            <person name="Bailey T.L."/>
            <person name="Bansal M."/>
            <person name="Baxter L."/>
            <person name="Beisel K.W."/>
            <person name="Bersano T."/>
            <person name="Bono H."/>
            <person name="Chalk A.M."/>
            <person name="Chiu K.P."/>
            <person name="Choudhary V."/>
            <person name="Christoffels A."/>
            <person name="Clutterbuck D.R."/>
            <person name="Crowe M.L."/>
            <person name="Dalla E."/>
            <person name="Dalrymple B.P."/>
            <person name="de Bono B."/>
            <person name="Della Gatta G."/>
            <person name="di Bernardo D."/>
            <person name="Down T."/>
            <person name="Engstrom P."/>
            <person name="Fagiolini M."/>
            <person name="Faulkner G."/>
            <person name="Fletcher C.F."/>
            <person name="Fukushima T."/>
            <person name="Furuno M."/>
            <person name="Futaki S."/>
            <person name="Gariboldi M."/>
            <person name="Georgii-Hemming P."/>
            <person name="Gingeras T.R."/>
            <person name="Gojobori T."/>
            <person name="Green R.E."/>
            <person name="Gustincich S."/>
            <person name="Harbers M."/>
            <person name="Hayashi Y."/>
            <person name="Hensch T.K."/>
            <person name="Hirokawa N."/>
            <person name="Hill D."/>
            <person name="Huminiecki L."/>
            <person name="Iacono M."/>
            <person name="Ikeo K."/>
            <person name="Iwama A."/>
            <person name="Ishikawa T."/>
            <person name="Jakt M."/>
            <person name="Kanapin A."/>
            <person name="Katoh M."/>
            <person name="Kawasawa Y."/>
            <person name="Kelso J."/>
            <person name="Kitamura H."/>
            <person name="Kitano H."/>
            <person name="Kollias G."/>
            <person name="Krishnan S.P."/>
            <person name="Kruger A."/>
            <person name="Kummerfeld S.K."/>
            <person name="Kurochkin I.V."/>
            <person name="Lareau L.F."/>
            <person name="Lazarevic D."/>
            <person name="Lipovich L."/>
            <person name="Liu J."/>
            <person name="Liuni S."/>
            <person name="McWilliam S."/>
            <person name="Madan Babu M."/>
            <person name="Madera M."/>
            <person name="Marchionni L."/>
            <person name="Matsuda H."/>
            <person name="Matsuzawa S."/>
            <person name="Miki H."/>
            <person name="Mignone F."/>
            <person name="Miyake S."/>
            <person name="Morris K."/>
            <person name="Mottagui-Tabar S."/>
            <person name="Mulder N."/>
            <person name="Nakano N."/>
            <person name="Nakauchi H."/>
            <person name="Ng P."/>
            <person name="Nilsson R."/>
            <person name="Nishiguchi S."/>
            <person name="Nishikawa S."/>
            <person name="Nori F."/>
            <person name="Ohara O."/>
            <person name="Okazaki Y."/>
            <person name="Orlando V."/>
            <person name="Pang K.C."/>
            <person name="Pavan W.J."/>
            <person name="Pavesi G."/>
            <person name="Pesole G."/>
            <person name="Petrovsky N."/>
            <person name="Piazza S."/>
            <person name="Reed J."/>
            <person name="Reid J.F."/>
            <person name="Ring B.Z."/>
            <person name="Ringwald M."/>
            <person name="Rost B."/>
            <person name="Ruan Y."/>
            <person name="Salzberg S.L."/>
            <person name="Sandelin A."/>
            <person name="Schneider C."/>
            <person name="Schoenbach C."/>
            <person name="Sekiguchi K."/>
            <person name="Semple C.A."/>
            <person name="Seno S."/>
            <person name="Sessa L."/>
            <person name="Sheng Y."/>
            <person name="Shibata Y."/>
            <person name="Shimada H."/>
            <person name="Shimada K."/>
            <person name="Silva D."/>
            <person name="Sinclair B."/>
            <person name="Sperling S."/>
            <person name="Stupka E."/>
            <person name="Sugiura K."/>
            <person name="Sultana R."/>
            <person name="Takenaka Y."/>
            <person name="Taki K."/>
            <person name="Tammoja K."/>
            <person name="Tan S.L."/>
            <person name="Tang S."/>
            <person name="Taylor M.S."/>
            <person name="Tegner J."/>
            <person name="Teichmann S.A."/>
            <person name="Ueda H.R."/>
            <person name="van Nimwegen E."/>
            <person name="Verardo R."/>
            <person name="Wei C.L."/>
            <person name="Yagi K."/>
            <person name="Yamanishi H."/>
            <person name="Zabarovsky E."/>
            <person name="Zhu S."/>
            <person name="Zimmer A."/>
            <person name="Hide W."/>
            <person name="Bult C."/>
            <person name="Grimmond S.M."/>
            <person name="Teasdale R.D."/>
            <person name="Liu E.T."/>
            <person name="Brusic V."/>
            <person name="Quackenbush J."/>
            <person name="Wahlestedt C."/>
            <person name="Mattick J.S."/>
            <person name="Hume D.A."/>
            <person name="Kai C."/>
            <person name="Sasaki D."/>
            <person name="Tomaru Y."/>
            <person name="Fukuda S."/>
            <person name="Kanamori-Katayama M."/>
            <person name="Suzuki M."/>
            <person name="Aoki J."/>
            <person name="Arakawa T."/>
            <person name="Iida J."/>
            <person name="Imamura K."/>
            <person name="Itoh M."/>
            <person name="Kato T."/>
            <person name="Kawaji H."/>
            <person name="Kawagashira N."/>
            <person name="Kawashima T."/>
            <person name="Kojima M."/>
            <person name="Kondo S."/>
            <person name="Konno H."/>
            <person name="Nakano K."/>
            <person name="Ninomiya N."/>
            <person name="Nishio T."/>
            <person name="Okada M."/>
            <person name="Plessy C."/>
            <person name="Shibata K."/>
            <person name="Shiraki T."/>
            <person name="Suzuki S."/>
            <person name="Tagami M."/>
            <person name="Waki K."/>
            <person name="Watahiki A."/>
            <person name="Okamura-Oho Y."/>
            <person name="Suzuki H."/>
            <person name="Kawai J."/>
            <person name="Hayashizaki Y."/>
        </authorList>
    </citation>
    <scope>NUCLEOTIDE SEQUENCE [LARGE SCALE MRNA] OF 1-382</scope>
    <source>
        <strain>C57BL/6J</strain>
        <tissue>Retina</tissue>
    </source>
</reference>
<reference key="3">
    <citation type="journal article" date="2004" name="DNA Res.">
        <title>Prediction of the coding sequences of mouse homologues of KIAA gene: IV. The complete nucleotide sequences of 500 mouse KIAA-homologous cDNAs identified by screening of terminal sequences of cDNA clones randomly sampled from size-fractionated libraries.</title>
        <authorList>
            <person name="Okazaki N."/>
            <person name="Kikuno R."/>
            <person name="Ohara R."/>
            <person name="Inamoto S."/>
            <person name="Koseki H."/>
            <person name="Hiraoka S."/>
            <person name="Saga Y."/>
            <person name="Seino S."/>
            <person name="Nishimura M."/>
            <person name="Kaisho T."/>
            <person name="Hoshino K."/>
            <person name="Kitamura H."/>
            <person name="Nagase T."/>
            <person name="Ohara O."/>
            <person name="Koga H."/>
        </authorList>
    </citation>
    <scope>NUCLEOTIDE SEQUENCE [LARGE SCALE MRNA] OF 1159-3095</scope>
    <source>
        <tissue>Intestine</tissue>
    </source>
</reference>
<reference key="4">
    <citation type="journal article" date="2007" name="Proc. Natl. Acad. Sci. U.S.A.">
        <title>Large-scale phosphorylation analysis of mouse liver.</title>
        <authorList>
            <person name="Villen J."/>
            <person name="Beausoleil S.A."/>
            <person name="Gerber S.A."/>
            <person name="Gygi S.P."/>
        </authorList>
    </citation>
    <scope>PHOSPHORYLATION [LARGE SCALE ANALYSIS] AT SER-1812</scope>
    <scope>IDENTIFICATION BY MASS SPECTROMETRY [LARGE SCALE ANALYSIS]</scope>
    <source>
        <tissue>Liver</tissue>
    </source>
</reference>
<reference key="5">
    <citation type="journal article" date="2009" name="Immunity">
        <title>The phagosomal proteome in interferon-gamma-activated macrophages.</title>
        <authorList>
            <person name="Trost M."/>
            <person name="English L."/>
            <person name="Lemieux S."/>
            <person name="Courcelles M."/>
            <person name="Desjardins M."/>
            <person name="Thibault P."/>
        </authorList>
    </citation>
    <scope>IDENTIFICATION BY MASS SPECTROMETRY [LARGE SCALE ANALYSIS]</scope>
</reference>
<reference key="6">
    <citation type="journal article" date="2010" name="Cell">
        <title>A tissue-specific atlas of mouse protein phosphorylation and expression.</title>
        <authorList>
            <person name="Huttlin E.L."/>
            <person name="Jedrychowski M.P."/>
            <person name="Elias J.E."/>
            <person name="Goswami T."/>
            <person name="Rad R."/>
            <person name="Beausoleil S.A."/>
            <person name="Villen J."/>
            <person name="Haas W."/>
            <person name="Sowa M.E."/>
            <person name="Gygi S.P."/>
        </authorList>
    </citation>
    <scope>PHOSPHORYLATION [LARGE SCALE ANALYSIS] AT SER-874; SER-935; SER-1200; SER-1606; SER-1930; SER-2421 AND SER-2809</scope>
    <scope>IDENTIFICATION BY MASS SPECTROMETRY [LARGE SCALE ANALYSIS]</scope>
    <source>
        <tissue>Kidney</tissue>
        <tissue>Lung</tissue>
        <tissue>Pancreas</tissue>
        <tissue>Spleen</tissue>
        <tissue>Testis</tissue>
    </source>
</reference>
<reference key="7">
    <citation type="journal article" date="2016" name="Development">
        <title>CFAP157 is a murine downstream effector of FOXJ1 that is specifically required for flagellum morphogenesis and sperm motility.</title>
        <authorList>
            <person name="Weidemann M."/>
            <person name="Schuster-Gossler K."/>
            <person name="Stauber M."/>
            <person name="Wrede C."/>
            <person name="Hegermann J."/>
            <person name="Ott T."/>
            <person name="Boldt K."/>
            <person name="Beyer T."/>
            <person name="Serth K."/>
            <person name="Kremmer E."/>
            <person name="Blum M."/>
            <person name="Ueffing M."/>
            <person name="Gossler A."/>
        </authorList>
    </citation>
    <scope>INTERACTION WITH CFAP157</scope>
</reference>
<dbReference type="EMBL" id="AC120391">
    <property type="status" value="NOT_ANNOTATED_CDS"/>
    <property type="molecule type" value="Genomic_DNA"/>
</dbReference>
<dbReference type="EMBL" id="AC121314">
    <property type="status" value="NOT_ANNOTATED_CDS"/>
    <property type="molecule type" value="Genomic_DNA"/>
</dbReference>
<dbReference type="EMBL" id="AK044664">
    <property type="protein sequence ID" value="BAC32024.1"/>
    <property type="molecule type" value="mRNA"/>
</dbReference>
<dbReference type="EMBL" id="AK172956">
    <property type="protein sequence ID" value="BAD32234.1"/>
    <property type="molecule type" value="mRNA"/>
</dbReference>
<dbReference type="CCDS" id="CCDS48400.1"/>
<dbReference type="RefSeq" id="NP_001034273.1">
    <property type="nucleotide sequence ID" value="NM_001039184.2"/>
</dbReference>
<dbReference type="SMR" id="E9Q309"/>
<dbReference type="FunCoup" id="E9Q309">
    <property type="interactions" value="1667"/>
</dbReference>
<dbReference type="IntAct" id="E9Q309">
    <property type="interactions" value="12"/>
</dbReference>
<dbReference type="MINT" id="E9Q309"/>
<dbReference type="STRING" id="10090.ENSMUSP00000120085"/>
<dbReference type="GlyGen" id="E9Q309">
    <property type="glycosylation" value="3 sites, 1 O-linked glycan (3 sites)"/>
</dbReference>
<dbReference type="iPTMnet" id="E9Q309"/>
<dbReference type="PhosphoSitePlus" id="E9Q309"/>
<dbReference type="jPOST" id="E9Q309"/>
<dbReference type="PaxDb" id="10090-ENSMUSP00000120085"/>
<dbReference type="PeptideAtlas" id="E9Q309"/>
<dbReference type="ProteomicsDB" id="281368"/>
<dbReference type="Pumba" id="E9Q309"/>
<dbReference type="Antibodypedia" id="34424">
    <property type="antibodies" value="81 antibodies from 22 providers"/>
</dbReference>
<dbReference type="Ensembl" id="ENSMUST00000138762.8">
    <property type="protein sequence ID" value="ENSMUSP00000120085.2"/>
    <property type="gene ID" value="ENSMUSG00000033671.19"/>
</dbReference>
<dbReference type="GeneID" id="74081"/>
<dbReference type="KEGG" id="mmu:74081"/>
<dbReference type="UCSC" id="uc007dbs.2">
    <property type="organism name" value="mouse"/>
</dbReference>
<dbReference type="AGR" id="MGI:1921331"/>
<dbReference type="CTD" id="9857"/>
<dbReference type="MGI" id="MGI:1921331">
    <property type="gene designation" value="Cep350"/>
</dbReference>
<dbReference type="VEuPathDB" id="HostDB:ENSMUSG00000033671"/>
<dbReference type="eggNOG" id="KOG4568">
    <property type="taxonomic scope" value="Eukaryota"/>
</dbReference>
<dbReference type="GeneTree" id="ENSGT00940000155130"/>
<dbReference type="HOGENOM" id="CLU_000421_0_0_1"/>
<dbReference type="InParanoid" id="E9Q309"/>
<dbReference type="OMA" id="ESKHIYC"/>
<dbReference type="OrthoDB" id="306254at2759"/>
<dbReference type="PhylomeDB" id="E9Q309"/>
<dbReference type="TreeFam" id="TF329845"/>
<dbReference type="BioGRID-ORCS" id="74081">
    <property type="hits" value="10 hits in 77 CRISPR screens"/>
</dbReference>
<dbReference type="ChiTaRS" id="Cep350">
    <property type="organism name" value="mouse"/>
</dbReference>
<dbReference type="PRO" id="PR:E9Q309"/>
<dbReference type="Proteomes" id="UP000000589">
    <property type="component" value="Chromosome 1"/>
</dbReference>
<dbReference type="RNAct" id="E9Q309">
    <property type="molecule type" value="protein"/>
</dbReference>
<dbReference type="Bgee" id="ENSMUSG00000033671">
    <property type="expression patterns" value="Expressed in metanephric cortical collecting duct and 252 other cell types or tissues"/>
</dbReference>
<dbReference type="ExpressionAtlas" id="E9Q309">
    <property type="expression patterns" value="baseline and differential"/>
</dbReference>
<dbReference type="GO" id="GO:0005814">
    <property type="term" value="C:centriole"/>
    <property type="evidence" value="ECO:0000250"/>
    <property type="project" value="UniProtKB"/>
</dbReference>
<dbReference type="GO" id="GO:0005813">
    <property type="term" value="C:centrosome"/>
    <property type="evidence" value="ECO:0000250"/>
    <property type="project" value="UniProtKB"/>
</dbReference>
<dbReference type="GO" id="GO:0036064">
    <property type="term" value="C:ciliary basal body"/>
    <property type="evidence" value="ECO:0007669"/>
    <property type="project" value="Ensembl"/>
</dbReference>
<dbReference type="GO" id="GO:0005829">
    <property type="term" value="C:cytosol"/>
    <property type="evidence" value="ECO:0007669"/>
    <property type="project" value="Ensembl"/>
</dbReference>
<dbReference type="GO" id="GO:0005654">
    <property type="term" value="C:nucleoplasm"/>
    <property type="evidence" value="ECO:0007669"/>
    <property type="project" value="Ensembl"/>
</dbReference>
<dbReference type="GO" id="GO:0005819">
    <property type="term" value="C:spindle"/>
    <property type="evidence" value="ECO:0007669"/>
    <property type="project" value="UniProtKB-SubCell"/>
</dbReference>
<dbReference type="GO" id="GO:0008017">
    <property type="term" value="F:microtubule binding"/>
    <property type="evidence" value="ECO:0007669"/>
    <property type="project" value="InterPro"/>
</dbReference>
<dbReference type="GO" id="GO:0034453">
    <property type="term" value="P:microtubule anchoring"/>
    <property type="evidence" value="ECO:0007669"/>
    <property type="project" value="InterPro"/>
</dbReference>
<dbReference type="GO" id="GO:1905515">
    <property type="term" value="P:non-motile cilium assembly"/>
    <property type="evidence" value="ECO:0000315"/>
    <property type="project" value="MGI"/>
</dbReference>
<dbReference type="GO" id="GO:0071539">
    <property type="term" value="P:protein localization to centrosome"/>
    <property type="evidence" value="ECO:0000315"/>
    <property type="project" value="MGI"/>
</dbReference>
<dbReference type="Gene3D" id="2.30.30.190">
    <property type="entry name" value="CAP Gly-rich-like domain"/>
    <property type="match status" value="1"/>
</dbReference>
<dbReference type="InterPro" id="IPR036859">
    <property type="entry name" value="CAP-Gly_dom_sf"/>
</dbReference>
<dbReference type="InterPro" id="IPR000938">
    <property type="entry name" value="CAP-Gly_domain"/>
</dbReference>
<dbReference type="InterPro" id="IPR028750">
    <property type="entry name" value="CEP350/CC187"/>
</dbReference>
<dbReference type="InterPro" id="IPR025486">
    <property type="entry name" value="DUF4378"/>
</dbReference>
<dbReference type="PANTHER" id="PTHR13958">
    <property type="entry name" value="CENTROSOME-ASSOCIATED PROTEIN 350"/>
    <property type="match status" value="1"/>
</dbReference>
<dbReference type="PANTHER" id="PTHR13958:SF4">
    <property type="entry name" value="CENTROSOME-ASSOCIATED PROTEIN 350"/>
    <property type="match status" value="1"/>
</dbReference>
<dbReference type="Pfam" id="PF01302">
    <property type="entry name" value="CAP_GLY"/>
    <property type="match status" value="1"/>
</dbReference>
<dbReference type="Pfam" id="PF14309">
    <property type="entry name" value="DUF4378"/>
    <property type="match status" value="1"/>
</dbReference>
<dbReference type="SMART" id="SM01052">
    <property type="entry name" value="CAP_GLY"/>
    <property type="match status" value="1"/>
</dbReference>
<dbReference type="SUPFAM" id="SSF74924">
    <property type="entry name" value="Cap-Gly domain"/>
    <property type="match status" value="1"/>
</dbReference>
<dbReference type="PROSITE" id="PS00845">
    <property type="entry name" value="CAP_GLY_1"/>
    <property type="match status" value="1"/>
</dbReference>
<dbReference type="PROSITE" id="PS50245">
    <property type="entry name" value="CAP_GLY_2"/>
    <property type="match status" value="1"/>
</dbReference>
<protein>
    <recommendedName>
        <fullName>Centrosome-associated protein 350</fullName>
        <shortName>Cep350</shortName>
    </recommendedName>
</protein>
<organism>
    <name type="scientific">Mus musculus</name>
    <name type="common">Mouse</name>
    <dbReference type="NCBI Taxonomy" id="10090"/>
    <lineage>
        <taxon>Eukaryota</taxon>
        <taxon>Metazoa</taxon>
        <taxon>Chordata</taxon>
        <taxon>Craniata</taxon>
        <taxon>Vertebrata</taxon>
        <taxon>Euteleostomi</taxon>
        <taxon>Mammalia</taxon>
        <taxon>Eutheria</taxon>
        <taxon>Euarchontoglires</taxon>
        <taxon>Glires</taxon>
        <taxon>Rodentia</taxon>
        <taxon>Myomorpha</taxon>
        <taxon>Muroidea</taxon>
        <taxon>Muridae</taxon>
        <taxon>Murinae</taxon>
        <taxon>Mus</taxon>
        <taxon>Mus</taxon>
    </lineage>
</organism>
<proteinExistence type="evidence at protein level"/>
<gene>
    <name evidence="8" type="primary">Cep350</name>
    <name evidence="6" type="synonym">Kiaa0480</name>
</gene>
<feature type="chain" id="PRO_0000440628" description="Centrosome-associated protein 350">
    <location>
        <begin position="1"/>
        <end position="3095"/>
    </location>
</feature>
<feature type="domain" description="CAP-Gly" evidence="3">
    <location>
        <begin position="2504"/>
        <end position="2546"/>
    </location>
</feature>
<feature type="region of interest" description="Disordered" evidence="4">
    <location>
        <begin position="1"/>
        <end position="24"/>
    </location>
</feature>
<feature type="region of interest" description="Disordered" evidence="4">
    <location>
        <begin position="63"/>
        <end position="105"/>
    </location>
</feature>
<feature type="region of interest" description="Disordered" evidence="4">
    <location>
        <begin position="219"/>
        <end position="239"/>
    </location>
</feature>
<feature type="region of interest" description="Disordered" evidence="4">
    <location>
        <begin position="251"/>
        <end position="272"/>
    </location>
</feature>
<feature type="region of interest" description="Disordered" evidence="4">
    <location>
        <begin position="430"/>
        <end position="493"/>
    </location>
</feature>
<feature type="region of interest" description="Disordered" evidence="4">
    <location>
        <begin position="538"/>
        <end position="623"/>
    </location>
</feature>
<feature type="region of interest" description="Disordered" evidence="4">
    <location>
        <begin position="671"/>
        <end position="718"/>
    </location>
</feature>
<feature type="region of interest" description="Disordered" evidence="4">
    <location>
        <begin position="977"/>
        <end position="996"/>
    </location>
</feature>
<feature type="region of interest" description="Disordered" evidence="4">
    <location>
        <begin position="1099"/>
        <end position="1128"/>
    </location>
</feature>
<feature type="region of interest" description="Disordered" evidence="4">
    <location>
        <begin position="1151"/>
        <end position="1265"/>
    </location>
</feature>
<feature type="region of interest" description="Disordered" evidence="4">
    <location>
        <begin position="1490"/>
        <end position="1668"/>
    </location>
</feature>
<feature type="region of interest" description="Disordered" evidence="4">
    <location>
        <begin position="1720"/>
        <end position="1739"/>
    </location>
</feature>
<feature type="region of interest" description="Disordered" evidence="4">
    <location>
        <begin position="1787"/>
        <end position="1864"/>
    </location>
</feature>
<feature type="region of interest" description="Disordered" evidence="4">
    <location>
        <begin position="1893"/>
        <end position="2017"/>
    </location>
</feature>
<feature type="region of interest" description="Disordered" evidence="4">
    <location>
        <begin position="2116"/>
        <end position="2155"/>
    </location>
</feature>
<feature type="region of interest" description="Disordered" evidence="4">
    <location>
        <begin position="2191"/>
        <end position="2265"/>
    </location>
</feature>
<feature type="region of interest" description="Disordered" evidence="4">
    <location>
        <begin position="2286"/>
        <end position="2427"/>
    </location>
</feature>
<feature type="region of interest" description="Disordered" evidence="4">
    <location>
        <begin position="2440"/>
        <end position="2471"/>
    </location>
</feature>
<feature type="region of interest" description="Disordered" evidence="4">
    <location>
        <begin position="2767"/>
        <end position="2793"/>
    </location>
</feature>
<feature type="coiled-coil region" evidence="2">
    <location>
        <begin position="596"/>
        <end position="641"/>
    </location>
</feature>
<feature type="coiled-coil region" evidence="2">
    <location>
        <begin position="1363"/>
        <end position="1402"/>
    </location>
</feature>
<feature type="coiled-coil region" evidence="2">
    <location>
        <begin position="1700"/>
        <end position="1793"/>
    </location>
</feature>
<feature type="coiled-coil region" evidence="2">
    <location>
        <begin position="1850"/>
        <end position="1893"/>
    </location>
</feature>
<feature type="coiled-coil region" evidence="2">
    <location>
        <begin position="2043"/>
        <end position="2092"/>
    </location>
</feature>
<feature type="coiled-coil region" evidence="2">
    <location>
        <begin position="2700"/>
        <end position="2731"/>
    </location>
</feature>
<feature type="compositionally biased region" description="Polar residues" evidence="4">
    <location>
        <begin position="14"/>
        <end position="24"/>
    </location>
</feature>
<feature type="compositionally biased region" description="Polar residues" evidence="4">
    <location>
        <begin position="228"/>
        <end position="238"/>
    </location>
</feature>
<feature type="compositionally biased region" description="Low complexity" evidence="4">
    <location>
        <begin position="251"/>
        <end position="265"/>
    </location>
</feature>
<feature type="compositionally biased region" description="Basic and acidic residues" evidence="4">
    <location>
        <begin position="438"/>
        <end position="457"/>
    </location>
</feature>
<feature type="compositionally biased region" description="Basic and acidic residues" evidence="4">
    <location>
        <begin position="464"/>
        <end position="476"/>
    </location>
</feature>
<feature type="compositionally biased region" description="Low complexity" evidence="4">
    <location>
        <begin position="481"/>
        <end position="491"/>
    </location>
</feature>
<feature type="compositionally biased region" description="Basic and acidic residues" evidence="4">
    <location>
        <begin position="587"/>
        <end position="623"/>
    </location>
</feature>
<feature type="compositionally biased region" description="Basic and acidic residues" evidence="4">
    <location>
        <begin position="690"/>
        <end position="699"/>
    </location>
</feature>
<feature type="compositionally biased region" description="Low complexity" evidence="4">
    <location>
        <begin position="701"/>
        <end position="714"/>
    </location>
</feature>
<feature type="compositionally biased region" description="Low complexity" evidence="4">
    <location>
        <begin position="979"/>
        <end position="988"/>
    </location>
</feature>
<feature type="compositionally biased region" description="Polar residues" evidence="4">
    <location>
        <begin position="1119"/>
        <end position="1128"/>
    </location>
</feature>
<feature type="compositionally biased region" description="Low complexity" evidence="4">
    <location>
        <begin position="1153"/>
        <end position="1168"/>
    </location>
</feature>
<feature type="compositionally biased region" description="Basic and acidic residues" evidence="4">
    <location>
        <begin position="1194"/>
        <end position="1206"/>
    </location>
</feature>
<feature type="compositionally biased region" description="Low complexity" evidence="4">
    <location>
        <begin position="1251"/>
        <end position="1265"/>
    </location>
</feature>
<feature type="compositionally biased region" description="Basic and acidic residues" evidence="4">
    <location>
        <begin position="1503"/>
        <end position="1513"/>
    </location>
</feature>
<feature type="compositionally biased region" description="Low complexity" evidence="4">
    <location>
        <begin position="1517"/>
        <end position="1526"/>
    </location>
</feature>
<feature type="compositionally biased region" description="Low complexity" evidence="4">
    <location>
        <begin position="1536"/>
        <end position="1545"/>
    </location>
</feature>
<feature type="compositionally biased region" description="Basic and acidic residues" evidence="4">
    <location>
        <begin position="1551"/>
        <end position="1564"/>
    </location>
</feature>
<feature type="compositionally biased region" description="Basic and acidic residues" evidence="4">
    <location>
        <begin position="1624"/>
        <end position="1640"/>
    </location>
</feature>
<feature type="compositionally biased region" description="Basic and acidic residues" evidence="4">
    <location>
        <begin position="1787"/>
        <end position="1796"/>
    </location>
</feature>
<feature type="compositionally biased region" description="Low complexity" evidence="4">
    <location>
        <begin position="1819"/>
        <end position="1835"/>
    </location>
</feature>
<feature type="compositionally biased region" description="Basic and acidic residues" evidence="4">
    <location>
        <begin position="1845"/>
        <end position="1864"/>
    </location>
</feature>
<feature type="compositionally biased region" description="Basic and acidic residues" evidence="4">
    <location>
        <begin position="1894"/>
        <end position="1915"/>
    </location>
</feature>
<feature type="compositionally biased region" description="Low complexity" evidence="4">
    <location>
        <begin position="1980"/>
        <end position="1994"/>
    </location>
</feature>
<feature type="compositionally biased region" description="Basic and acidic residues" evidence="4">
    <location>
        <begin position="1999"/>
        <end position="2011"/>
    </location>
</feature>
<feature type="compositionally biased region" description="Basic and acidic residues" evidence="4">
    <location>
        <begin position="2133"/>
        <end position="2151"/>
    </location>
</feature>
<feature type="compositionally biased region" description="Basic and acidic residues" evidence="4">
    <location>
        <begin position="2202"/>
        <end position="2214"/>
    </location>
</feature>
<feature type="compositionally biased region" description="Basic and acidic residues" evidence="4">
    <location>
        <begin position="2227"/>
        <end position="2259"/>
    </location>
</feature>
<feature type="compositionally biased region" description="Polar residues" evidence="4">
    <location>
        <begin position="2286"/>
        <end position="2300"/>
    </location>
</feature>
<feature type="compositionally biased region" description="Basic and acidic residues" evidence="4">
    <location>
        <begin position="2301"/>
        <end position="2331"/>
    </location>
</feature>
<feature type="compositionally biased region" description="Polar residues" evidence="4">
    <location>
        <begin position="2349"/>
        <end position="2362"/>
    </location>
</feature>
<feature type="compositionally biased region" description="Basic and acidic residues" evidence="4">
    <location>
        <begin position="2377"/>
        <end position="2387"/>
    </location>
</feature>
<feature type="compositionally biased region" description="Basic and acidic residues" evidence="4">
    <location>
        <begin position="2395"/>
        <end position="2407"/>
    </location>
</feature>
<feature type="compositionally biased region" description="Low complexity" evidence="4">
    <location>
        <begin position="2409"/>
        <end position="2420"/>
    </location>
</feature>
<feature type="compositionally biased region" description="Basic and acidic residues" evidence="4">
    <location>
        <begin position="2455"/>
        <end position="2465"/>
    </location>
</feature>
<feature type="compositionally biased region" description="Polar residues" evidence="4">
    <location>
        <begin position="2780"/>
        <end position="2791"/>
    </location>
</feature>
<feature type="modified residue" description="Phosphoserine" evidence="1">
    <location>
        <position position="84"/>
    </location>
</feature>
<feature type="modified residue" description="Phosphoserine" evidence="1">
    <location>
        <position position="140"/>
    </location>
</feature>
<feature type="modified residue" description="Phosphoserine" evidence="1">
    <location>
        <position position="468"/>
    </location>
</feature>
<feature type="modified residue" description="Phosphoserine" evidence="1">
    <location>
        <position position="503"/>
    </location>
</feature>
<feature type="modified residue" description="Phosphoserine" evidence="1">
    <location>
        <position position="691"/>
    </location>
</feature>
<feature type="modified residue" description="Phosphoserine" evidence="10">
    <location>
        <position position="874"/>
    </location>
</feature>
<feature type="modified residue" description="Phosphoserine" evidence="10">
    <location>
        <position position="935"/>
    </location>
</feature>
<feature type="modified residue" description="Phosphoserine" evidence="1">
    <location>
        <position position="1057"/>
    </location>
</feature>
<feature type="modified residue" description="Phosphoserine" evidence="10">
    <location>
        <position position="1200"/>
    </location>
</feature>
<feature type="modified residue" description="Phosphothreonine" evidence="1">
    <location>
        <position position="1253"/>
    </location>
</feature>
<feature type="modified residue" description="Phosphoserine" evidence="1">
    <location>
        <position position="1256"/>
    </location>
</feature>
<feature type="modified residue" description="Phosphoserine" evidence="1">
    <location>
        <position position="1259"/>
    </location>
</feature>
<feature type="modified residue" description="Phosphoserine" evidence="10">
    <location>
        <position position="1606"/>
    </location>
</feature>
<feature type="modified residue" description="Phosphoserine" evidence="1">
    <location>
        <position position="1641"/>
    </location>
</feature>
<feature type="modified residue" description="Phosphoserine" evidence="1">
    <location>
        <position position="1646"/>
    </location>
</feature>
<feature type="modified residue" description="Phosphoserine" evidence="9">
    <location>
        <position position="1812"/>
    </location>
</feature>
<feature type="modified residue" description="Phosphoserine" evidence="10">
    <location>
        <position position="1930"/>
    </location>
</feature>
<feature type="modified residue" description="Phosphoserine" evidence="1">
    <location>
        <position position="2108"/>
    </location>
</feature>
<feature type="modified residue" description="Phosphoserine" evidence="1">
    <location>
        <position position="2198"/>
    </location>
</feature>
<feature type="modified residue" description="Phosphoserine" evidence="10">
    <location>
        <position position="2421"/>
    </location>
</feature>
<feature type="modified residue" description="Phosphoserine" evidence="1">
    <location>
        <position position="2450"/>
    </location>
</feature>
<feature type="modified residue" description="Phosphothreonine" evidence="1">
    <location>
        <position position="2671"/>
    </location>
</feature>
<feature type="modified residue" description="Phosphoserine" evidence="10">
    <location>
        <position position="2809"/>
    </location>
</feature>
<feature type="modified residue" description="Phosphoserine" evidence="1">
    <location>
        <position position="2818"/>
    </location>
</feature>
<feature type="sequence conflict" description="In Ref. 3; BAD32234." evidence="7" ref="3">
    <original>L</original>
    <variation>P</variation>
    <location>
        <position position="2050"/>
    </location>
</feature>